<name>ATPB_STRTD</name>
<sequence length="468" mass="50867">MSSGKIAQVVGPVVDVAFATGDKLPEINNALVVYTDEEKSRRIVLEVALELGEGVVRTIAMESTDGLTRGLEVLDTGRPISVPVGKETLGRVFNVLGDTIDMEAPFADDAEREPIHKKAPTFDELSTSTEILETGIKVIDLLAPYLKGGKVGLFGGAGVGKTVLIQELIHNIAQEHGGISVFTGVGERSREGNDLYWEMKESGVIEKTAMVFGQMNEPPGARMRVALTGLTIAEYFRDVEGQDVLLFIDNIFRFTQAGSEVSALLGRMPSAVGYQPTLATEMGQLQERITSTKKGSVTSIQAIYVPADDYTDPAPATAFAHLDSTTNLERKLTQMGIYPAVDPLASSSRALSPEIVGEEHYAVATEVQRVLQRYRELQDIIAILGMDELSDEDKTLVGRARRIQFFLSQNFNVAEQFTGQPGSYVPVAETVRGFKEILEGKYDNLPEDAFRSVGPIEDVVAKAKAMGY</sequence>
<dbReference type="EC" id="7.1.2.2" evidence="1"/>
<dbReference type="EMBL" id="CP000419">
    <property type="protein sequence ID" value="ABJ65799.1"/>
    <property type="molecule type" value="Genomic_DNA"/>
</dbReference>
<dbReference type="RefSeq" id="WP_011226937.1">
    <property type="nucleotide sequence ID" value="NC_008532.1"/>
</dbReference>
<dbReference type="SMR" id="Q03LX3"/>
<dbReference type="GeneID" id="66898394"/>
<dbReference type="KEGG" id="ste:STER_0521"/>
<dbReference type="HOGENOM" id="CLU_022398_0_2_9"/>
<dbReference type="GO" id="GO:0005886">
    <property type="term" value="C:plasma membrane"/>
    <property type="evidence" value="ECO:0007669"/>
    <property type="project" value="UniProtKB-SubCell"/>
</dbReference>
<dbReference type="GO" id="GO:0045259">
    <property type="term" value="C:proton-transporting ATP synthase complex"/>
    <property type="evidence" value="ECO:0007669"/>
    <property type="project" value="UniProtKB-KW"/>
</dbReference>
<dbReference type="GO" id="GO:0005524">
    <property type="term" value="F:ATP binding"/>
    <property type="evidence" value="ECO:0007669"/>
    <property type="project" value="UniProtKB-UniRule"/>
</dbReference>
<dbReference type="GO" id="GO:0016887">
    <property type="term" value="F:ATP hydrolysis activity"/>
    <property type="evidence" value="ECO:0007669"/>
    <property type="project" value="InterPro"/>
</dbReference>
<dbReference type="GO" id="GO:0046933">
    <property type="term" value="F:proton-transporting ATP synthase activity, rotational mechanism"/>
    <property type="evidence" value="ECO:0007669"/>
    <property type="project" value="UniProtKB-UniRule"/>
</dbReference>
<dbReference type="CDD" id="cd18110">
    <property type="entry name" value="ATP-synt_F1_beta_C"/>
    <property type="match status" value="1"/>
</dbReference>
<dbReference type="CDD" id="cd18115">
    <property type="entry name" value="ATP-synt_F1_beta_N"/>
    <property type="match status" value="1"/>
</dbReference>
<dbReference type="CDD" id="cd01133">
    <property type="entry name" value="F1-ATPase_beta_CD"/>
    <property type="match status" value="1"/>
</dbReference>
<dbReference type="FunFam" id="1.10.1140.10:FF:000001">
    <property type="entry name" value="ATP synthase subunit beta"/>
    <property type="match status" value="1"/>
</dbReference>
<dbReference type="FunFam" id="2.40.10.170:FF:000005">
    <property type="entry name" value="ATP synthase subunit beta"/>
    <property type="match status" value="1"/>
</dbReference>
<dbReference type="FunFam" id="3.40.50.300:FF:000004">
    <property type="entry name" value="ATP synthase subunit beta"/>
    <property type="match status" value="1"/>
</dbReference>
<dbReference type="Gene3D" id="2.40.10.170">
    <property type="match status" value="1"/>
</dbReference>
<dbReference type="Gene3D" id="1.10.1140.10">
    <property type="entry name" value="Bovine Mitochondrial F1-atpase, Atp Synthase Beta Chain, Chain D, domain 3"/>
    <property type="match status" value="1"/>
</dbReference>
<dbReference type="Gene3D" id="3.40.50.300">
    <property type="entry name" value="P-loop containing nucleotide triphosphate hydrolases"/>
    <property type="match status" value="1"/>
</dbReference>
<dbReference type="HAMAP" id="MF_01347">
    <property type="entry name" value="ATP_synth_beta_bact"/>
    <property type="match status" value="1"/>
</dbReference>
<dbReference type="InterPro" id="IPR003593">
    <property type="entry name" value="AAA+_ATPase"/>
</dbReference>
<dbReference type="InterPro" id="IPR055190">
    <property type="entry name" value="ATP-synt_VA_C"/>
</dbReference>
<dbReference type="InterPro" id="IPR005722">
    <property type="entry name" value="ATP_synth_F1_bsu"/>
</dbReference>
<dbReference type="InterPro" id="IPR020003">
    <property type="entry name" value="ATPase_a/bsu_AS"/>
</dbReference>
<dbReference type="InterPro" id="IPR050053">
    <property type="entry name" value="ATPase_alpha/beta_chains"/>
</dbReference>
<dbReference type="InterPro" id="IPR004100">
    <property type="entry name" value="ATPase_F1/V1/A1_a/bsu_N"/>
</dbReference>
<dbReference type="InterPro" id="IPR036121">
    <property type="entry name" value="ATPase_F1/V1/A1_a/bsu_N_sf"/>
</dbReference>
<dbReference type="InterPro" id="IPR000194">
    <property type="entry name" value="ATPase_F1/V1/A1_a/bsu_nucl-bd"/>
</dbReference>
<dbReference type="InterPro" id="IPR024034">
    <property type="entry name" value="ATPase_F1/V1_b/a_C"/>
</dbReference>
<dbReference type="InterPro" id="IPR027417">
    <property type="entry name" value="P-loop_NTPase"/>
</dbReference>
<dbReference type="NCBIfam" id="TIGR01039">
    <property type="entry name" value="atpD"/>
    <property type="match status" value="1"/>
</dbReference>
<dbReference type="PANTHER" id="PTHR15184">
    <property type="entry name" value="ATP SYNTHASE"/>
    <property type="match status" value="1"/>
</dbReference>
<dbReference type="PANTHER" id="PTHR15184:SF71">
    <property type="entry name" value="ATP SYNTHASE SUBUNIT BETA, MITOCHONDRIAL"/>
    <property type="match status" value="1"/>
</dbReference>
<dbReference type="Pfam" id="PF00006">
    <property type="entry name" value="ATP-synt_ab"/>
    <property type="match status" value="1"/>
</dbReference>
<dbReference type="Pfam" id="PF02874">
    <property type="entry name" value="ATP-synt_ab_N"/>
    <property type="match status" value="1"/>
</dbReference>
<dbReference type="Pfam" id="PF22919">
    <property type="entry name" value="ATP-synt_VA_C"/>
    <property type="match status" value="1"/>
</dbReference>
<dbReference type="SMART" id="SM00382">
    <property type="entry name" value="AAA"/>
    <property type="match status" value="1"/>
</dbReference>
<dbReference type="SUPFAM" id="SSF47917">
    <property type="entry name" value="C-terminal domain of alpha and beta subunits of F1 ATP synthase"/>
    <property type="match status" value="1"/>
</dbReference>
<dbReference type="SUPFAM" id="SSF50615">
    <property type="entry name" value="N-terminal domain of alpha and beta subunits of F1 ATP synthase"/>
    <property type="match status" value="1"/>
</dbReference>
<dbReference type="SUPFAM" id="SSF52540">
    <property type="entry name" value="P-loop containing nucleoside triphosphate hydrolases"/>
    <property type="match status" value="1"/>
</dbReference>
<dbReference type="PROSITE" id="PS00152">
    <property type="entry name" value="ATPASE_ALPHA_BETA"/>
    <property type="match status" value="1"/>
</dbReference>
<accession>Q03LX3</accession>
<protein>
    <recommendedName>
        <fullName evidence="1">ATP synthase subunit beta</fullName>
        <ecNumber evidence="1">7.1.2.2</ecNumber>
    </recommendedName>
    <alternativeName>
        <fullName evidence="1">ATP synthase F1 sector subunit beta</fullName>
    </alternativeName>
    <alternativeName>
        <fullName evidence="1">F-ATPase subunit beta</fullName>
    </alternativeName>
</protein>
<keyword id="KW-0066">ATP synthesis</keyword>
<keyword id="KW-0067">ATP-binding</keyword>
<keyword id="KW-1003">Cell membrane</keyword>
<keyword id="KW-0139">CF(1)</keyword>
<keyword id="KW-0375">Hydrogen ion transport</keyword>
<keyword id="KW-0406">Ion transport</keyword>
<keyword id="KW-0472">Membrane</keyword>
<keyword id="KW-0547">Nucleotide-binding</keyword>
<keyword id="KW-1278">Translocase</keyword>
<keyword id="KW-0813">Transport</keyword>
<proteinExistence type="inferred from homology"/>
<organism>
    <name type="scientific">Streptococcus thermophilus (strain ATCC BAA-491 / LMD-9)</name>
    <dbReference type="NCBI Taxonomy" id="322159"/>
    <lineage>
        <taxon>Bacteria</taxon>
        <taxon>Bacillati</taxon>
        <taxon>Bacillota</taxon>
        <taxon>Bacilli</taxon>
        <taxon>Lactobacillales</taxon>
        <taxon>Streptococcaceae</taxon>
        <taxon>Streptococcus</taxon>
    </lineage>
</organism>
<comment type="function">
    <text evidence="1">Produces ATP from ADP in the presence of a proton gradient across the membrane. The catalytic sites are hosted primarily by the beta subunits.</text>
</comment>
<comment type="catalytic activity">
    <reaction evidence="1">
        <text>ATP + H2O + 4 H(+)(in) = ADP + phosphate + 5 H(+)(out)</text>
        <dbReference type="Rhea" id="RHEA:57720"/>
        <dbReference type="ChEBI" id="CHEBI:15377"/>
        <dbReference type="ChEBI" id="CHEBI:15378"/>
        <dbReference type="ChEBI" id="CHEBI:30616"/>
        <dbReference type="ChEBI" id="CHEBI:43474"/>
        <dbReference type="ChEBI" id="CHEBI:456216"/>
        <dbReference type="EC" id="7.1.2.2"/>
    </reaction>
</comment>
<comment type="subunit">
    <text evidence="1">F-type ATPases have 2 components, CF(1) - the catalytic core - and CF(0) - the membrane proton channel. CF(1) has five subunits: alpha(3), beta(3), gamma(1), delta(1), epsilon(1). CF(0) has three main subunits: a(1), b(2) and c(9-12). The alpha and beta chains form an alternating ring which encloses part of the gamma chain. CF(1) is attached to CF(0) by a central stalk formed by the gamma and epsilon chains, while a peripheral stalk is formed by the delta and b chains.</text>
</comment>
<comment type="subcellular location">
    <subcellularLocation>
        <location evidence="1">Cell membrane</location>
        <topology evidence="1">Peripheral membrane protein</topology>
    </subcellularLocation>
</comment>
<comment type="similarity">
    <text evidence="1">Belongs to the ATPase alpha/beta chains family.</text>
</comment>
<evidence type="ECO:0000255" key="1">
    <source>
        <dbReference type="HAMAP-Rule" id="MF_01347"/>
    </source>
</evidence>
<feature type="chain" id="PRO_1000055172" description="ATP synthase subunit beta">
    <location>
        <begin position="1"/>
        <end position="468"/>
    </location>
</feature>
<feature type="binding site" evidence="1">
    <location>
        <begin position="155"/>
        <end position="162"/>
    </location>
    <ligand>
        <name>ATP</name>
        <dbReference type="ChEBI" id="CHEBI:30616"/>
    </ligand>
</feature>
<reference key="1">
    <citation type="journal article" date="2006" name="Proc. Natl. Acad. Sci. U.S.A.">
        <title>Comparative genomics of the lactic acid bacteria.</title>
        <authorList>
            <person name="Makarova K.S."/>
            <person name="Slesarev A."/>
            <person name="Wolf Y.I."/>
            <person name="Sorokin A."/>
            <person name="Mirkin B."/>
            <person name="Koonin E.V."/>
            <person name="Pavlov A."/>
            <person name="Pavlova N."/>
            <person name="Karamychev V."/>
            <person name="Polouchine N."/>
            <person name="Shakhova V."/>
            <person name="Grigoriev I."/>
            <person name="Lou Y."/>
            <person name="Rohksar D."/>
            <person name="Lucas S."/>
            <person name="Huang K."/>
            <person name="Goodstein D.M."/>
            <person name="Hawkins T."/>
            <person name="Plengvidhya V."/>
            <person name="Welker D."/>
            <person name="Hughes J."/>
            <person name="Goh Y."/>
            <person name="Benson A."/>
            <person name="Baldwin K."/>
            <person name="Lee J.-H."/>
            <person name="Diaz-Muniz I."/>
            <person name="Dosti B."/>
            <person name="Smeianov V."/>
            <person name="Wechter W."/>
            <person name="Barabote R."/>
            <person name="Lorca G."/>
            <person name="Altermann E."/>
            <person name="Barrangou R."/>
            <person name="Ganesan B."/>
            <person name="Xie Y."/>
            <person name="Rawsthorne H."/>
            <person name="Tamir D."/>
            <person name="Parker C."/>
            <person name="Breidt F."/>
            <person name="Broadbent J.R."/>
            <person name="Hutkins R."/>
            <person name="O'Sullivan D."/>
            <person name="Steele J."/>
            <person name="Unlu G."/>
            <person name="Saier M.H. Jr."/>
            <person name="Klaenhammer T."/>
            <person name="Richardson P."/>
            <person name="Kozyavkin S."/>
            <person name="Weimer B.C."/>
            <person name="Mills D.A."/>
        </authorList>
    </citation>
    <scope>NUCLEOTIDE SEQUENCE [LARGE SCALE GENOMIC DNA]</scope>
    <source>
        <strain>ATCC BAA-491 / LMD-9</strain>
    </source>
</reference>
<gene>
    <name evidence="1" type="primary">atpD</name>
    <name type="ordered locus">STER_0521</name>
</gene>